<proteinExistence type="evidence at transcript level"/>
<organism>
    <name type="scientific">Bos taurus</name>
    <name type="common">Bovine</name>
    <dbReference type="NCBI Taxonomy" id="9913"/>
    <lineage>
        <taxon>Eukaryota</taxon>
        <taxon>Metazoa</taxon>
        <taxon>Chordata</taxon>
        <taxon>Craniata</taxon>
        <taxon>Vertebrata</taxon>
        <taxon>Euteleostomi</taxon>
        <taxon>Mammalia</taxon>
        <taxon>Eutheria</taxon>
        <taxon>Laurasiatheria</taxon>
        <taxon>Artiodactyla</taxon>
        <taxon>Ruminantia</taxon>
        <taxon>Pecora</taxon>
        <taxon>Bovidae</taxon>
        <taxon>Bovinae</taxon>
        <taxon>Bos</taxon>
    </lineage>
</organism>
<comment type="subcellular location">
    <subcellularLocation>
        <location evidence="2">Membrane</location>
        <topology evidence="2">Single-pass membrane protein</topology>
    </subcellularLocation>
</comment>
<comment type="similarity">
    <text evidence="2">Belongs to the CNPPD1 family.</text>
</comment>
<sequence length="411" mass="45427">MDLAGLLLDEEGTFSLTGFQDFTFLPGHQKLSARIRRRLYYGWDWETDCTLEELSSPVADIAVELLQKAAPSPIRRLQKKYVAHVSREACISPCAMMLALVYIERLRHRNPDYLQHVSSSDLFLISMMVASKYLYDEGEEEEVFNDEWGAAGGVAVPTLNALERGFLSAMDWRLYTDPREIFEVLSWLEGCVAEQQGRRRGWYTYTDLCVLLEQPAWQLVLGSLCQQLAKLSCLLAMAYVSSVALAVASMAVIHQSLGLSCSPPPGPPDLGLASRCLLEPCIPSPMPQCLPSPANASGCLEGNVVLRSLWGSLLVSLTPPPLPPPDPPAPPILLHNCPLCQKLQKDSPTCRACHHLNHTVPTGPPSPWSHSHGLAPPWPWSPMPPLLPQPQQCSLFSIMELARLKSFIFPG</sequence>
<feature type="chain" id="PRO_0000089350" description="Protein CNPPD1">
    <location>
        <begin position="1"/>
        <end position="411"/>
    </location>
</feature>
<feature type="transmembrane region" description="Helical" evidence="1">
    <location>
        <begin position="231"/>
        <end position="253"/>
    </location>
</feature>
<reference key="1">
    <citation type="journal article" date="2005" name="BMC Genomics">
        <title>Characterization of 954 bovine full-CDS cDNA sequences.</title>
        <authorList>
            <person name="Harhay G.P."/>
            <person name="Sonstegard T.S."/>
            <person name="Keele J.W."/>
            <person name="Heaton M.P."/>
            <person name="Clawson M.L."/>
            <person name="Snelling W.M."/>
            <person name="Wiedmann R.T."/>
            <person name="Van Tassell C.P."/>
            <person name="Smith T.P.L."/>
        </authorList>
    </citation>
    <scope>NUCLEOTIDE SEQUENCE [LARGE SCALE MRNA]</scope>
</reference>
<dbReference type="EMBL" id="BT020928">
    <property type="protein sequence ID" value="AAX08945.1"/>
    <property type="molecule type" value="mRNA"/>
</dbReference>
<dbReference type="RefSeq" id="NP_001015538.1">
    <property type="nucleotide sequence ID" value="NM_001015538.1"/>
</dbReference>
<dbReference type="SMR" id="Q5E9J2"/>
<dbReference type="FunCoup" id="Q5E9J2">
    <property type="interactions" value="2435"/>
</dbReference>
<dbReference type="STRING" id="9913.ENSBTAP00000016753"/>
<dbReference type="PaxDb" id="9913-ENSBTAP00000016753"/>
<dbReference type="GeneID" id="507473"/>
<dbReference type="KEGG" id="bta:507473"/>
<dbReference type="CTD" id="27013"/>
<dbReference type="eggNOG" id="KOG1674">
    <property type="taxonomic scope" value="Eukaryota"/>
</dbReference>
<dbReference type="InParanoid" id="Q5E9J2"/>
<dbReference type="OrthoDB" id="244495at2759"/>
<dbReference type="Proteomes" id="UP000009136">
    <property type="component" value="Unplaced"/>
</dbReference>
<dbReference type="GO" id="GO:0000307">
    <property type="term" value="C:cyclin-dependent protein kinase holoenzyme complex"/>
    <property type="evidence" value="ECO:0000318"/>
    <property type="project" value="GO_Central"/>
</dbReference>
<dbReference type="GO" id="GO:0016020">
    <property type="term" value="C:membrane"/>
    <property type="evidence" value="ECO:0007669"/>
    <property type="project" value="UniProtKB-SubCell"/>
</dbReference>
<dbReference type="GO" id="GO:0005634">
    <property type="term" value="C:nucleus"/>
    <property type="evidence" value="ECO:0000318"/>
    <property type="project" value="GO_Central"/>
</dbReference>
<dbReference type="GO" id="GO:0016538">
    <property type="term" value="F:cyclin-dependent protein serine/threonine kinase regulator activity"/>
    <property type="evidence" value="ECO:0000318"/>
    <property type="project" value="GO_Central"/>
</dbReference>
<dbReference type="GO" id="GO:0019901">
    <property type="term" value="F:protein kinase binding"/>
    <property type="evidence" value="ECO:0007669"/>
    <property type="project" value="InterPro"/>
</dbReference>
<dbReference type="CDD" id="cd20557">
    <property type="entry name" value="CYCLIN_ScPCL1-like"/>
    <property type="match status" value="1"/>
</dbReference>
<dbReference type="Gene3D" id="1.10.472.10">
    <property type="entry name" value="Cyclin-like"/>
    <property type="match status" value="1"/>
</dbReference>
<dbReference type="InterPro" id="IPR013922">
    <property type="entry name" value="Cyclin_PHO80-like"/>
</dbReference>
<dbReference type="PANTHER" id="PTHR15615">
    <property type="match status" value="1"/>
</dbReference>
<dbReference type="PANTHER" id="PTHR15615:SF108">
    <property type="entry name" value="PROTEIN CNPPD1"/>
    <property type="match status" value="1"/>
</dbReference>
<dbReference type="Pfam" id="PF08613">
    <property type="entry name" value="Cyclin"/>
    <property type="match status" value="1"/>
</dbReference>
<gene>
    <name type="primary">CNPPD1</name>
</gene>
<evidence type="ECO:0000255" key="1"/>
<evidence type="ECO:0000305" key="2"/>
<keyword id="KW-0472">Membrane</keyword>
<keyword id="KW-1185">Reference proteome</keyword>
<keyword id="KW-0812">Transmembrane</keyword>
<keyword id="KW-1133">Transmembrane helix</keyword>
<accession>Q5E9J2</accession>
<name>CNPD1_BOVIN</name>
<protein>
    <recommendedName>
        <fullName>Protein CNPPD1</fullName>
    </recommendedName>
</protein>